<gene>
    <name evidence="1" type="primary">tsaD</name>
    <name type="synonym">gcp</name>
    <name type="ordered locus">SDY_3248</name>
</gene>
<organism>
    <name type="scientific">Shigella dysenteriae serotype 1 (strain Sd197)</name>
    <dbReference type="NCBI Taxonomy" id="300267"/>
    <lineage>
        <taxon>Bacteria</taxon>
        <taxon>Pseudomonadati</taxon>
        <taxon>Pseudomonadota</taxon>
        <taxon>Gammaproteobacteria</taxon>
        <taxon>Enterobacterales</taxon>
        <taxon>Enterobacteriaceae</taxon>
        <taxon>Shigella</taxon>
    </lineage>
</organism>
<feature type="chain" id="PRO_0000303538" description="tRNA N6-adenosine threonylcarbamoyltransferase">
    <location>
        <begin position="1"/>
        <end position="337"/>
    </location>
</feature>
<feature type="binding site" evidence="1">
    <location>
        <position position="111"/>
    </location>
    <ligand>
        <name>Fe cation</name>
        <dbReference type="ChEBI" id="CHEBI:24875"/>
    </ligand>
</feature>
<feature type="binding site" evidence="1">
    <location>
        <position position="115"/>
    </location>
    <ligand>
        <name>Fe cation</name>
        <dbReference type="ChEBI" id="CHEBI:24875"/>
    </ligand>
</feature>
<feature type="binding site" evidence="1">
    <location>
        <begin position="134"/>
        <end position="138"/>
    </location>
    <ligand>
        <name>substrate</name>
    </ligand>
</feature>
<feature type="binding site" evidence="1">
    <location>
        <position position="167"/>
    </location>
    <ligand>
        <name>substrate</name>
    </ligand>
</feature>
<feature type="binding site" evidence="1">
    <location>
        <position position="180"/>
    </location>
    <ligand>
        <name>substrate</name>
    </ligand>
</feature>
<feature type="binding site" evidence="1">
    <location>
        <position position="272"/>
    </location>
    <ligand>
        <name>substrate</name>
    </ligand>
</feature>
<feature type="binding site" evidence="1">
    <location>
        <position position="300"/>
    </location>
    <ligand>
        <name>Fe cation</name>
        <dbReference type="ChEBI" id="CHEBI:24875"/>
    </ligand>
</feature>
<reference key="1">
    <citation type="journal article" date="2005" name="Nucleic Acids Res.">
        <title>Genome dynamics and diversity of Shigella species, the etiologic agents of bacillary dysentery.</title>
        <authorList>
            <person name="Yang F."/>
            <person name="Yang J."/>
            <person name="Zhang X."/>
            <person name="Chen L."/>
            <person name="Jiang Y."/>
            <person name="Yan Y."/>
            <person name="Tang X."/>
            <person name="Wang J."/>
            <person name="Xiong Z."/>
            <person name="Dong J."/>
            <person name="Xue Y."/>
            <person name="Zhu Y."/>
            <person name="Xu X."/>
            <person name="Sun L."/>
            <person name="Chen S."/>
            <person name="Nie H."/>
            <person name="Peng J."/>
            <person name="Xu J."/>
            <person name="Wang Y."/>
            <person name="Yuan Z."/>
            <person name="Wen Y."/>
            <person name="Yao Z."/>
            <person name="Shen Y."/>
            <person name="Qiang B."/>
            <person name="Hou Y."/>
            <person name="Yu J."/>
            <person name="Jin Q."/>
        </authorList>
    </citation>
    <scope>NUCLEOTIDE SEQUENCE [LARGE SCALE GENOMIC DNA]</scope>
    <source>
        <strain>Sd197</strain>
    </source>
</reference>
<accession>Q32BQ3</accession>
<protein>
    <recommendedName>
        <fullName evidence="1">tRNA N6-adenosine threonylcarbamoyltransferase</fullName>
        <ecNumber evidence="1">2.3.1.234</ecNumber>
    </recommendedName>
    <alternativeName>
        <fullName evidence="1">N6-L-threonylcarbamoyladenine synthase</fullName>
        <shortName evidence="1">t(6)A synthase</shortName>
    </alternativeName>
    <alternativeName>
        <fullName evidence="1">t(6)A37 threonylcarbamoyladenosine biosynthesis protein TsaD</fullName>
    </alternativeName>
    <alternativeName>
        <fullName evidence="1">tRNA threonylcarbamoyladenosine biosynthesis protein TsaD</fullName>
    </alternativeName>
</protein>
<evidence type="ECO:0000255" key="1">
    <source>
        <dbReference type="HAMAP-Rule" id="MF_01445"/>
    </source>
</evidence>
<sequence length="337" mass="36008">MRVLGIETSCDETGIAIYDDEKGLLANQLYSQVKLHADYGGVVPELASRDHVRKTVPLIQAALKESGLTAKDIDAVAYTAGPGLVGALLVGATVGRSLAFAWDVPAIPVHHMEGHLLAPMLEDNPPEFPFVALLVSGGHTQLISVTGIGQYELLGESIDDAAGEAFDKTAKLLGLDYPGGPLLSKMAAQGTAGRFVFPRPMTDRPGLDFSFSGLKTFAANTIRDNGTDDQTRADIARAFEDAVVDTLMIKCKRALDQTGFKRLVMAGGVSANRTLRAKLAEMMKKRRGEVFYARPEFCTDNGAMIAYAGMVRFKAGATADLGVSVRPRWPLAELPAA</sequence>
<comment type="function">
    <text evidence="1">Required for the formation of a threonylcarbamoyl group on adenosine at position 37 (t(6)A37) in tRNAs that read codons beginning with adenine. Is involved in the transfer of the threonylcarbamoyl moiety of threonylcarbamoyl-AMP (TC-AMP) to the N6 group of A37, together with TsaE and TsaB. TsaD likely plays a direct catalytic role in this reaction.</text>
</comment>
<comment type="catalytic activity">
    <reaction evidence="1">
        <text>L-threonylcarbamoyladenylate + adenosine(37) in tRNA = N(6)-L-threonylcarbamoyladenosine(37) in tRNA + AMP + H(+)</text>
        <dbReference type="Rhea" id="RHEA:37059"/>
        <dbReference type="Rhea" id="RHEA-COMP:10162"/>
        <dbReference type="Rhea" id="RHEA-COMP:10163"/>
        <dbReference type="ChEBI" id="CHEBI:15378"/>
        <dbReference type="ChEBI" id="CHEBI:73682"/>
        <dbReference type="ChEBI" id="CHEBI:74411"/>
        <dbReference type="ChEBI" id="CHEBI:74418"/>
        <dbReference type="ChEBI" id="CHEBI:456215"/>
        <dbReference type="EC" id="2.3.1.234"/>
    </reaction>
</comment>
<comment type="cofactor">
    <cofactor evidence="1">
        <name>Fe(2+)</name>
        <dbReference type="ChEBI" id="CHEBI:29033"/>
    </cofactor>
    <text evidence="1">Binds 1 Fe(2+) ion per subunit.</text>
</comment>
<comment type="subcellular location">
    <subcellularLocation>
        <location evidence="1">Cytoplasm</location>
    </subcellularLocation>
</comment>
<comment type="similarity">
    <text evidence="1">Belongs to the KAE1 / TsaD family.</text>
</comment>
<name>TSAD_SHIDS</name>
<keyword id="KW-0012">Acyltransferase</keyword>
<keyword id="KW-0963">Cytoplasm</keyword>
<keyword id="KW-0408">Iron</keyword>
<keyword id="KW-0479">Metal-binding</keyword>
<keyword id="KW-1185">Reference proteome</keyword>
<keyword id="KW-0808">Transferase</keyword>
<keyword id="KW-0819">tRNA processing</keyword>
<dbReference type="EC" id="2.3.1.234" evidence="1"/>
<dbReference type="EMBL" id="CP000034">
    <property type="protein sequence ID" value="ABB63252.1"/>
    <property type="molecule type" value="Genomic_DNA"/>
</dbReference>
<dbReference type="RefSeq" id="WP_001264352.1">
    <property type="nucleotide sequence ID" value="NC_007606.1"/>
</dbReference>
<dbReference type="RefSeq" id="YP_404743.1">
    <property type="nucleotide sequence ID" value="NC_007606.1"/>
</dbReference>
<dbReference type="SMR" id="Q32BQ3"/>
<dbReference type="STRING" id="300267.SDY_3248"/>
<dbReference type="EnsemblBacteria" id="ABB63252">
    <property type="protein sequence ID" value="ABB63252"/>
    <property type="gene ID" value="SDY_3248"/>
</dbReference>
<dbReference type="GeneID" id="75173186"/>
<dbReference type="KEGG" id="sdy:SDY_3248"/>
<dbReference type="PATRIC" id="fig|300267.13.peg.3882"/>
<dbReference type="HOGENOM" id="CLU_023208_0_2_6"/>
<dbReference type="Proteomes" id="UP000002716">
    <property type="component" value="Chromosome"/>
</dbReference>
<dbReference type="GO" id="GO:0005737">
    <property type="term" value="C:cytoplasm"/>
    <property type="evidence" value="ECO:0007669"/>
    <property type="project" value="UniProtKB-SubCell"/>
</dbReference>
<dbReference type="GO" id="GO:0005506">
    <property type="term" value="F:iron ion binding"/>
    <property type="evidence" value="ECO:0007669"/>
    <property type="project" value="UniProtKB-UniRule"/>
</dbReference>
<dbReference type="GO" id="GO:0061711">
    <property type="term" value="F:N(6)-L-threonylcarbamoyladenine synthase activity"/>
    <property type="evidence" value="ECO:0007669"/>
    <property type="project" value="UniProtKB-EC"/>
</dbReference>
<dbReference type="GO" id="GO:0002949">
    <property type="term" value="P:tRNA threonylcarbamoyladenosine modification"/>
    <property type="evidence" value="ECO:0007669"/>
    <property type="project" value="UniProtKB-UniRule"/>
</dbReference>
<dbReference type="CDD" id="cd24097">
    <property type="entry name" value="ASKHA_NBD_TsaD-like"/>
    <property type="match status" value="1"/>
</dbReference>
<dbReference type="FunFam" id="3.30.420.40:FF:000031">
    <property type="entry name" value="tRNA N6-adenosine threonylcarbamoyltransferase"/>
    <property type="match status" value="1"/>
</dbReference>
<dbReference type="Gene3D" id="3.30.420.40">
    <property type="match status" value="2"/>
</dbReference>
<dbReference type="HAMAP" id="MF_01445">
    <property type="entry name" value="TsaD"/>
    <property type="match status" value="1"/>
</dbReference>
<dbReference type="InterPro" id="IPR043129">
    <property type="entry name" value="ATPase_NBD"/>
</dbReference>
<dbReference type="InterPro" id="IPR000905">
    <property type="entry name" value="Gcp-like_dom"/>
</dbReference>
<dbReference type="InterPro" id="IPR017861">
    <property type="entry name" value="KAE1/TsaD"/>
</dbReference>
<dbReference type="InterPro" id="IPR017860">
    <property type="entry name" value="Peptidase_M22_CS"/>
</dbReference>
<dbReference type="InterPro" id="IPR022450">
    <property type="entry name" value="TsaD"/>
</dbReference>
<dbReference type="NCBIfam" id="TIGR00329">
    <property type="entry name" value="gcp_kae1"/>
    <property type="match status" value="1"/>
</dbReference>
<dbReference type="NCBIfam" id="TIGR03723">
    <property type="entry name" value="T6A_TsaD_YgjD"/>
    <property type="match status" value="1"/>
</dbReference>
<dbReference type="PANTHER" id="PTHR11735">
    <property type="entry name" value="TRNA N6-ADENOSINE THREONYLCARBAMOYLTRANSFERASE"/>
    <property type="match status" value="1"/>
</dbReference>
<dbReference type="PANTHER" id="PTHR11735:SF6">
    <property type="entry name" value="TRNA N6-ADENOSINE THREONYLCARBAMOYLTRANSFERASE, MITOCHONDRIAL"/>
    <property type="match status" value="1"/>
</dbReference>
<dbReference type="Pfam" id="PF00814">
    <property type="entry name" value="TsaD"/>
    <property type="match status" value="1"/>
</dbReference>
<dbReference type="PRINTS" id="PR00789">
    <property type="entry name" value="OSIALOPTASE"/>
</dbReference>
<dbReference type="SUPFAM" id="SSF53067">
    <property type="entry name" value="Actin-like ATPase domain"/>
    <property type="match status" value="1"/>
</dbReference>
<dbReference type="PROSITE" id="PS01016">
    <property type="entry name" value="GLYCOPROTEASE"/>
    <property type="match status" value="1"/>
</dbReference>
<proteinExistence type="inferred from homology"/>